<evidence type="ECO:0000250" key="1">
    <source>
        <dbReference type="UniProtKB" id="O70176"/>
    </source>
</evidence>
<evidence type="ECO:0000250" key="2">
    <source>
        <dbReference type="UniProtKB" id="P18509"/>
    </source>
</evidence>
<evidence type="ECO:0000255" key="3"/>
<evidence type="ECO:0000269" key="4">
    <source>
    </source>
</evidence>
<evidence type="ECO:0000269" key="5">
    <source>
    </source>
</evidence>
<evidence type="ECO:0000269" key="6">
    <source>
    </source>
</evidence>
<evidence type="ECO:0000305" key="7"/>
<comment type="function">
    <text evidence="1 2 4 5">PACAP is a neuropeptide involved in diverse array of physiological processes through activating the PACAP subfamily of class B1 G protein-coupled receptors: VIP receptor 1 (VIPR1), VIP receptor 2 (VIPR2), and PACAP type I receptor (ADCYAP1R1). Exerts neuroprotective and general cytoprotective effects due to anti-apoptotic, anti-inflammatory, and antioxidant actions (By similarity). Promotes neuron projection development through the RAPGEF2/Rap1/B-Raf/ERK pathway (PubMed:23800469). In chromaffin cells, induces long-lasting increase of intracellular calcium concentrations and neuroendocrine secretion (PubMed:18198219). Involved in the control of glucose homeostasis, induces insulin secretion by pancreatic beta cells (By similarity). PACAP exists in two bioactive forms from proteolysis of the same precursor protein, PACAP27 and PACAP38, which differ by eleven amino acid residues in the C-terminus (By similarity).</text>
</comment>
<comment type="subcellular location">
    <subcellularLocation>
        <location>Secreted</location>
    </subcellularLocation>
</comment>
<comment type="similarity">
    <text evidence="7">Belongs to the glucagon family.</text>
</comment>
<keyword id="KW-0027">Amidation</keyword>
<keyword id="KW-0165">Cleavage on pair of basic residues</keyword>
<keyword id="KW-0903">Direct protein sequencing</keyword>
<keyword id="KW-0372">Hormone</keyword>
<keyword id="KW-0524">Neurogenesis</keyword>
<keyword id="KW-1185">Reference proteome</keyword>
<keyword id="KW-0964">Secreted</keyword>
<keyword id="KW-0732">Signal</keyword>
<gene>
    <name type="primary">Adcyap1</name>
</gene>
<protein>
    <recommendedName>
        <fullName>Pituitary adenylate cyclase-activating polypeptide</fullName>
        <shortName>PACAP</shortName>
    </recommendedName>
    <component>
        <recommendedName>
            <fullName>PACAP-related peptide</fullName>
        </recommendedName>
        <alternativeName>
            <fullName>PRP-48</fullName>
        </alternativeName>
    </component>
    <component>
        <recommendedName>
            <fullName>Pituitary adenylate cyclase-activating polypeptide 27</fullName>
            <shortName>PACAP-27</shortName>
            <shortName>PACAP27</shortName>
        </recommendedName>
    </component>
    <component>
        <recommendedName>
            <fullName>Pituitary adenylate cyclase-activating polypeptide 38</fullName>
            <shortName>PACAP-38</shortName>
            <shortName>PACAP38</shortName>
        </recommendedName>
    </component>
</protein>
<reference key="1">
    <citation type="journal article" date="1990" name="Biochem. Biophys. Res. Commun.">
        <title>Molecular cloning and characterization of cDNA for the precursor of rat pituitary adenylate cyclase activating polypeptide (PACAP).</title>
        <authorList>
            <person name="Ogi K."/>
            <person name="Kimura C."/>
            <person name="Onda H."/>
            <person name="Arimura A."/>
            <person name="Fujino M."/>
        </authorList>
    </citation>
    <scope>NUCLEOTIDE SEQUENCE [MRNA]</scope>
    <source>
        <strain>Sprague-Dawley</strain>
        <tissue>Brain</tissue>
    </source>
</reference>
<reference key="2">
    <citation type="journal article" date="1995" name="Endocrinology">
        <title>Cloning and molecular characterization of complementary deoxyribonucleic acid corresponding to a novel form of pituitary adenylate cyclase-activating polypeptide messenger ribonucleic acid in the rat testis.</title>
        <authorList>
            <person name="Hurley J.D."/>
            <person name="Gardiner J.V."/>
            <person name="Jones P.M."/>
            <person name="Bloom S.R."/>
        </authorList>
    </citation>
    <scope>NUCLEOTIDE SEQUENCE [MRNA]</scope>
    <source>
        <strain>Wistar</strain>
        <tissue>Testis</tissue>
    </source>
</reference>
<reference key="3">
    <citation type="journal article" date="1989" name="Biochem. Biophys. Res. Commun.">
        <title>Isolation of a novel 38 residue-hypothalamic polypeptide which stimulates adenylate cyclase in pituitary cells.</title>
        <authorList>
            <person name="Miyata A."/>
            <person name="Arimura A."/>
            <person name="Dahl R.R."/>
            <person name="Minamino N."/>
            <person name="Uehara A."/>
            <person name="Jiang A."/>
            <person name="Culler M.D."/>
            <person name="Coy D.H."/>
        </authorList>
    </citation>
    <scope>PROTEIN SEQUENCE OF 131-168</scope>
    <scope>AMIDATION AT LYS-168</scope>
</reference>
<reference key="4">
    <citation type="journal article" date="2008" name="FASEB J.">
        <title>Selenoprotein T is a PACAP-regulated gene involved in intracellular Ca2+ mobilization and neuroendocrine secretion.</title>
        <authorList>
            <person name="Grumolato L."/>
            <person name="Ghzili H."/>
            <person name="Montero-Hadjadje M."/>
            <person name="Gasman S."/>
            <person name="Lesage J."/>
            <person name="Tanguy Y."/>
            <person name="Galas L."/>
            <person name="Ait-Ali D."/>
            <person name="Leprince J."/>
            <person name="Guerineau N.C."/>
            <person name="Elkahloun A.G."/>
            <person name="Fournier A."/>
            <person name="Vieau D."/>
            <person name="Vaudry H."/>
            <person name="Anouar Y."/>
        </authorList>
    </citation>
    <scope>FUNCTION</scope>
</reference>
<reference key="5">
    <citation type="journal article" date="2013" name="Sci. Signal.">
        <title>Rapgef2 Connects GPCR-Mediated cAMP Signals to ERK Activation in Neuronal and Endocrine Cells.</title>
        <authorList>
            <person name="Emery A.C."/>
            <person name="Eiden M.V."/>
            <person name="Mustafa T."/>
            <person name="Eiden L.E."/>
        </authorList>
    </citation>
    <scope>FUNCTION</scope>
</reference>
<accession>P13589</accession>
<proteinExistence type="evidence at protein level"/>
<name>PACA_RAT</name>
<sequence>MTMCSGARLALLVYGIIMHNSVSCSPAAGLSFPGIRPEEEAYDQDGNPLQDFYDWDPPGAGSPASALRDAYALYYPADRRDVAHEILNEAYRKVLDQLSARKYLQSMVARGMGENLAAAAVDDRAPLTKRHSDGIFTDSYSRYRKQMAVKKYLAAVLGKRYKQRVKNKGRRIAYL</sequence>
<organism>
    <name type="scientific">Rattus norvegicus</name>
    <name type="common">Rat</name>
    <dbReference type="NCBI Taxonomy" id="10116"/>
    <lineage>
        <taxon>Eukaryota</taxon>
        <taxon>Metazoa</taxon>
        <taxon>Chordata</taxon>
        <taxon>Craniata</taxon>
        <taxon>Vertebrata</taxon>
        <taxon>Euteleostomi</taxon>
        <taxon>Mammalia</taxon>
        <taxon>Eutheria</taxon>
        <taxon>Euarchontoglires</taxon>
        <taxon>Glires</taxon>
        <taxon>Rodentia</taxon>
        <taxon>Myomorpha</taxon>
        <taxon>Muroidea</taxon>
        <taxon>Muridae</taxon>
        <taxon>Murinae</taxon>
        <taxon>Rattus</taxon>
    </lineage>
</organism>
<dbReference type="EMBL" id="M63006">
    <property type="protein sequence ID" value="AAA41791.1"/>
    <property type="molecule type" value="mRNA"/>
</dbReference>
<dbReference type="EMBL" id="X80290">
    <property type="protein sequence ID" value="CAA56564.1"/>
    <property type="molecule type" value="mRNA"/>
</dbReference>
<dbReference type="PIR" id="A37786">
    <property type="entry name" value="A37786"/>
</dbReference>
<dbReference type="RefSeq" id="NP_058685.1">
    <property type="nucleotide sequence ID" value="NM_016989.2"/>
</dbReference>
<dbReference type="RefSeq" id="XP_006245734.1">
    <property type="nucleotide sequence ID" value="XM_006245672.5"/>
</dbReference>
<dbReference type="RefSeq" id="XP_006245735.1">
    <property type="nucleotide sequence ID" value="XM_006245673.5"/>
</dbReference>
<dbReference type="RefSeq" id="XP_006245736.1">
    <property type="nucleotide sequence ID" value="XM_006245674.5"/>
</dbReference>
<dbReference type="RefSeq" id="XP_008765640.1">
    <property type="nucleotide sequence ID" value="XM_008767418.4"/>
</dbReference>
<dbReference type="BMRB" id="P13589"/>
<dbReference type="SMR" id="P13589"/>
<dbReference type="FunCoup" id="P13589">
    <property type="interactions" value="394"/>
</dbReference>
<dbReference type="STRING" id="10116.ENSRNOP00000070007"/>
<dbReference type="BindingDB" id="P13589"/>
<dbReference type="PhosphoSitePlus" id="P13589"/>
<dbReference type="PaxDb" id="10116-ENSRNOP00000063920"/>
<dbReference type="Ensembl" id="ENSRNOT00000073432.3">
    <property type="protein sequence ID" value="ENSRNOP00000063920.3"/>
    <property type="gene ID" value="ENSRNOG00000049882.3"/>
</dbReference>
<dbReference type="GeneID" id="24166"/>
<dbReference type="KEGG" id="rno:24166"/>
<dbReference type="AGR" id="RGD:2037"/>
<dbReference type="CTD" id="116"/>
<dbReference type="RGD" id="2037">
    <property type="gene designation" value="Adcyap1"/>
</dbReference>
<dbReference type="eggNOG" id="ENOG502QSGB">
    <property type="taxonomic scope" value="Eukaryota"/>
</dbReference>
<dbReference type="GeneTree" id="ENSGT00950000183154"/>
<dbReference type="InParanoid" id="P13589"/>
<dbReference type="OMA" id="GIIMHCN"/>
<dbReference type="OrthoDB" id="9875627at2759"/>
<dbReference type="PhylomeDB" id="P13589"/>
<dbReference type="Reactome" id="R-RNO-420092">
    <property type="pathway name" value="Glucagon-type ligand receptors"/>
</dbReference>
<dbReference type="PRO" id="PR:P13589"/>
<dbReference type="Proteomes" id="UP000002494">
    <property type="component" value="Chromosome 9"/>
</dbReference>
<dbReference type="Bgee" id="ENSRNOG00000049882">
    <property type="expression patterns" value="Expressed in testis and 8 other cell types or tissues"/>
</dbReference>
<dbReference type="ExpressionAtlas" id="P13589">
    <property type="expression patterns" value="baseline and differential"/>
</dbReference>
<dbReference type="GO" id="GO:0005829">
    <property type="term" value="C:cytosol"/>
    <property type="evidence" value="ECO:0000304"/>
    <property type="project" value="Reactome"/>
</dbReference>
<dbReference type="GO" id="GO:0005615">
    <property type="term" value="C:extracellular space"/>
    <property type="evidence" value="ECO:0000314"/>
    <property type="project" value="RGD"/>
</dbReference>
<dbReference type="GO" id="GO:0043005">
    <property type="term" value="C:neuron projection"/>
    <property type="evidence" value="ECO:0000318"/>
    <property type="project" value="GO_Central"/>
</dbReference>
<dbReference type="GO" id="GO:0099013">
    <property type="term" value="C:neuronal dense core vesicle lumen"/>
    <property type="evidence" value="ECO:0000314"/>
    <property type="project" value="SynGO"/>
</dbReference>
<dbReference type="GO" id="GO:0043204">
    <property type="term" value="C:perikaryon"/>
    <property type="evidence" value="ECO:0000318"/>
    <property type="project" value="GO_Central"/>
</dbReference>
<dbReference type="GO" id="GO:0043195">
    <property type="term" value="C:terminal bouton"/>
    <property type="evidence" value="ECO:0000314"/>
    <property type="project" value="RGD"/>
</dbReference>
<dbReference type="GO" id="GO:0005184">
    <property type="term" value="F:neuropeptide hormone activity"/>
    <property type="evidence" value="ECO:0000314"/>
    <property type="project" value="UniProtKB"/>
</dbReference>
<dbReference type="GO" id="GO:0051428">
    <property type="term" value="F:peptide hormone receptor binding"/>
    <property type="evidence" value="ECO:0000250"/>
    <property type="project" value="UniProtKB"/>
</dbReference>
<dbReference type="GO" id="GO:0016521">
    <property type="term" value="F:pituitary adenylate cyclase activating polypeptide activity"/>
    <property type="evidence" value="ECO:0000314"/>
    <property type="project" value="BHF-UCL"/>
</dbReference>
<dbReference type="GO" id="GO:0031858">
    <property type="term" value="F:pituitary adenylate cyclase-activating polypeptide receptor binding"/>
    <property type="evidence" value="ECO:0000314"/>
    <property type="project" value="RGD"/>
</dbReference>
<dbReference type="GO" id="GO:0005102">
    <property type="term" value="F:signaling receptor binding"/>
    <property type="evidence" value="ECO:0000266"/>
    <property type="project" value="RGD"/>
</dbReference>
<dbReference type="GO" id="GO:0031891">
    <property type="term" value="F:type 1 vasoactive intestinal polypeptide receptor binding"/>
    <property type="evidence" value="ECO:0000250"/>
    <property type="project" value="UniProtKB"/>
</dbReference>
<dbReference type="GO" id="GO:0031892">
    <property type="term" value="F:type 2 vasoactive intestinal polypeptide receptor binding"/>
    <property type="evidence" value="ECO:0000250"/>
    <property type="project" value="UniProtKB"/>
</dbReference>
<dbReference type="GO" id="GO:0007189">
    <property type="term" value="P:adenylate cyclase-activating G protein-coupled receptor signaling pathway"/>
    <property type="evidence" value="ECO:0000314"/>
    <property type="project" value="BHF-UCL"/>
</dbReference>
<dbReference type="GO" id="GO:0007188">
    <property type="term" value="P:adenylate cyclase-modulating G protein-coupled receptor signaling pathway"/>
    <property type="evidence" value="ECO:0000315"/>
    <property type="project" value="UniProtKB"/>
</dbReference>
<dbReference type="GO" id="GO:0001662">
    <property type="term" value="P:behavioral fear response"/>
    <property type="evidence" value="ECO:0000314"/>
    <property type="project" value="RGD"/>
</dbReference>
<dbReference type="GO" id="GO:0071385">
    <property type="term" value="P:cellular response to glucocorticoid stimulus"/>
    <property type="evidence" value="ECO:0000270"/>
    <property type="project" value="RGD"/>
</dbReference>
<dbReference type="GO" id="GO:0001821">
    <property type="term" value="P:histamine secretion"/>
    <property type="evidence" value="ECO:0000314"/>
    <property type="project" value="RGD"/>
</dbReference>
<dbReference type="GO" id="GO:0030073">
    <property type="term" value="P:insulin secretion"/>
    <property type="evidence" value="ECO:0000250"/>
    <property type="project" value="UniProtKB"/>
</dbReference>
<dbReference type="GO" id="GO:0002865">
    <property type="term" value="P:negative regulation of acute inflammatory response to antigenic stimulus"/>
    <property type="evidence" value="ECO:0000314"/>
    <property type="project" value="RGD"/>
</dbReference>
<dbReference type="GO" id="GO:0002878">
    <property type="term" value="P:negative regulation of acute inflammatory response to non-antigenic stimulus"/>
    <property type="evidence" value="ECO:0000314"/>
    <property type="project" value="RGD"/>
</dbReference>
<dbReference type="GO" id="GO:0045786">
    <property type="term" value="P:negative regulation of cell cycle"/>
    <property type="evidence" value="ECO:0000266"/>
    <property type="project" value="RGD"/>
</dbReference>
<dbReference type="GO" id="GO:0060253">
    <property type="term" value="P:negative regulation of glial cell proliferation"/>
    <property type="evidence" value="ECO:0000314"/>
    <property type="project" value="RGD"/>
</dbReference>
<dbReference type="GO" id="GO:0010656">
    <property type="term" value="P:negative regulation of muscle cell apoptotic process"/>
    <property type="evidence" value="ECO:0000314"/>
    <property type="project" value="RGD"/>
</dbReference>
<dbReference type="GO" id="GO:0043267">
    <property type="term" value="P:negative regulation of potassium ion transport"/>
    <property type="evidence" value="ECO:0000314"/>
    <property type="project" value="RGD"/>
</dbReference>
<dbReference type="GO" id="GO:0031175">
    <property type="term" value="P:neuron projection development"/>
    <property type="evidence" value="ECO:0000314"/>
    <property type="project" value="UniProtKB"/>
</dbReference>
<dbReference type="GO" id="GO:0007218">
    <property type="term" value="P:neuropeptide signaling pathway"/>
    <property type="evidence" value="ECO:0000314"/>
    <property type="project" value="UniProtKB"/>
</dbReference>
<dbReference type="GO" id="GO:0001541">
    <property type="term" value="P:ovarian follicle development"/>
    <property type="evidence" value="ECO:0000314"/>
    <property type="project" value="RGD"/>
</dbReference>
<dbReference type="GO" id="GO:0021983">
    <property type="term" value="P:pituitary gland development"/>
    <property type="evidence" value="ECO:0000270"/>
    <property type="project" value="RGD"/>
</dbReference>
<dbReference type="GO" id="GO:0141163">
    <property type="term" value="P:positive regulation of cAMP/PKA signal transduction"/>
    <property type="evidence" value="ECO:0000314"/>
    <property type="project" value="RGD"/>
</dbReference>
<dbReference type="GO" id="GO:0008284">
    <property type="term" value="P:positive regulation of cell population proliferation"/>
    <property type="evidence" value="ECO:0000314"/>
    <property type="project" value="RGD"/>
</dbReference>
<dbReference type="GO" id="GO:0071651">
    <property type="term" value="P:positive regulation of chemokine (C-C motif) ligand 5 production"/>
    <property type="evidence" value="ECO:0000266"/>
    <property type="project" value="RGD"/>
</dbReference>
<dbReference type="GO" id="GO:0120162">
    <property type="term" value="P:positive regulation of cold-induced thermogenesis"/>
    <property type="evidence" value="ECO:0000250"/>
    <property type="project" value="YuBioLab"/>
</dbReference>
<dbReference type="GO" id="GO:0007204">
    <property type="term" value="P:positive regulation of cytosolic calcium ion concentration"/>
    <property type="evidence" value="ECO:0000314"/>
    <property type="project" value="RGD"/>
</dbReference>
<dbReference type="GO" id="GO:0070374">
    <property type="term" value="P:positive regulation of ERK1 and ERK2 cascade"/>
    <property type="evidence" value="ECO:0000314"/>
    <property type="project" value="UniProtKB"/>
</dbReference>
<dbReference type="GO" id="GO:0010628">
    <property type="term" value="P:positive regulation of gene expression"/>
    <property type="evidence" value="ECO:0000266"/>
    <property type="project" value="RGD"/>
</dbReference>
<dbReference type="GO" id="GO:0060124">
    <property type="term" value="P:positive regulation of growth hormone secretion"/>
    <property type="evidence" value="ECO:0000314"/>
    <property type="project" value="RGD"/>
</dbReference>
<dbReference type="GO" id="GO:0043547">
    <property type="term" value="P:positive regulation of GTPase activity"/>
    <property type="evidence" value="ECO:0000314"/>
    <property type="project" value="UniProtKB"/>
</dbReference>
<dbReference type="GO" id="GO:0032755">
    <property type="term" value="P:positive regulation of interleukin-6 production"/>
    <property type="evidence" value="ECO:0000314"/>
    <property type="project" value="RGD"/>
</dbReference>
<dbReference type="GO" id="GO:0010976">
    <property type="term" value="P:positive regulation of neuron projection development"/>
    <property type="evidence" value="ECO:0000314"/>
    <property type="project" value="RGD"/>
</dbReference>
<dbReference type="GO" id="GO:0045860">
    <property type="term" value="P:positive regulation of protein kinase activity"/>
    <property type="evidence" value="ECO:0000314"/>
    <property type="project" value="UniProtKB"/>
</dbReference>
<dbReference type="GO" id="GO:0090274">
    <property type="term" value="P:positive regulation of somatostatin secretion"/>
    <property type="evidence" value="ECO:0000314"/>
    <property type="project" value="RGD"/>
</dbReference>
<dbReference type="GO" id="GO:0051968">
    <property type="term" value="P:positive regulation of synaptic transmission, glutamatergic"/>
    <property type="evidence" value="ECO:0000314"/>
    <property type="project" value="RGD"/>
</dbReference>
<dbReference type="GO" id="GO:0045944">
    <property type="term" value="P:positive regulation of transcription by RNA polymerase II"/>
    <property type="evidence" value="ECO:0000314"/>
    <property type="project" value="UniProtKB"/>
</dbReference>
<dbReference type="GO" id="GO:0008277">
    <property type="term" value="P:regulation of G protein-coupled receptor signaling pathway"/>
    <property type="evidence" value="ECO:0000250"/>
    <property type="project" value="UniProtKB"/>
</dbReference>
<dbReference type="GO" id="GO:0070445">
    <property type="term" value="P:regulation of oligodendrocyte progenitor proliferation"/>
    <property type="evidence" value="ECO:0000314"/>
    <property type="project" value="RGD"/>
</dbReference>
<dbReference type="GO" id="GO:0060078">
    <property type="term" value="P:regulation of postsynaptic membrane potential"/>
    <property type="evidence" value="ECO:0000314"/>
    <property type="project" value="RGD"/>
</dbReference>
<dbReference type="GO" id="GO:0032880">
    <property type="term" value="P:regulation of protein localization"/>
    <property type="evidence" value="ECO:0000314"/>
    <property type="project" value="BHF-UCL"/>
</dbReference>
<dbReference type="GO" id="GO:0045471">
    <property type="term" value="P:response to ethanol"/>
    <property type="evidence" value="ECO:0000270"/>
    <property type="project" value="RGD"/>
</dbReference>
<dbReference type="GO" id="GO:0042594">
    <property type="term" value="P:response to starvation"/>
    <property type="evidence" value="ECO:0000270"/>
    <property type="project" value="RGD"/>
</dbReference>
<dbReference type="GO" id="GO:0042311">
    <property type="term" value="P:vasodilation"/>
    <property type="evidence" value="ECO:0000314"/>
    <property type="project" value="RGD"/>
</dbReference>
<dbReference type="Gene3D" id="6.10.250.590">
    <property type="match status" value="1"/>
</dbReference>
<dbReference type="InterPro" id="IPR000532">
    <property type="entry name" value="Glucagon_GIP_secretin_VIP"/>
</dbReference>
<dbReference type="InterPro" id="IPR046963">
    <property type="entry name" value="VIP/GHRH-like"/>
</dbReference>
<dbReference type="PANTHER" id="PTHR11213">
    <property type="entry name" value="GLUCAGON-FAMILY NEUROPEPTIDE"/>
    <property type="match status" value="1"/>
</dbReference>
<dbReference type="PANTHER" id="PTHR11213:SF1">
    <property type="entry name" value="PITUITARY ADENYLATE CYCLASE-ACTIVATING POLYPEPTIDE"/>
    <property type="match status" value="1"/>
</dbReference>
<dbReference type="Pfam" id="PF00123">
    <property type="entry name" value="Hormone_2"/>
    <property type="match status" value="2"/>
</dbReference>
<dbReference type="PRINTS" id="PR00275">
    <property type="entry name" value="GLUCAGON"/>
</dbReference>
<dbReference type="SMART" id="SM00070">
    <property type="entry name" value="GLUCA"/>
    <property type="match status" value="2"/>
</dbReference>
<dbReference type="PROSITE" id="PS00260">
    <property type="entry name" value="GLUCAGON"/>
    <property type="match status" value="1"/>
</dbReference>
<feature type="signal peptide" evidence="3">
    <location>
        <begin position="1"/>
        <end position="24"/>
    </location>
</feature>
<feature type="propeptide" id="PRO_0000011501">
    <location>
        <begin position="25"/>
        <end position="78"/>
    </location>
</feature>
<feature type="peptide" id="PRO_0000011502" description="PACAP-related peptide">
    <location>
        <begin position="81"/>
        <end position="128"/>
    </location>
</feature>
<feature type="peptide" id="PRO_0000011503" description="Pituitary adenylate cyclase-activating polypeptide 38">
    <location>
        <begin position="131"/>
        <end position="168"/>
    </location>
</feature>
<feature type="peptide" id="PRO_0000011504" description="Pituitary adenylate cyclase-activating polypeptide 27">
    <location>
        <begin position="131"/>
        <end position="157"/>
    </location>
</feature>
<feature type="propeptide" id="PRO_0000011505">
    <location>
        <begin position="172"/>
        <end position="175"/>
    </location>
</feature>
<feature type="region of interest" description="Important for receptor binding" evidence="2">
    <location>
        <begin position="149"/>
        <end position="157"/>
    </location>
</feature>
<feature type="modified residue" description="Leucine amide" evidence="2">
    <location>
        <position position="157"/>
    </location>
</feature>
<feature type="modified residue" description="Lysine amide" evidence="6">
    <location>
        <position position="168"/>
    </location>
</feature>
<feature type="sequence conflict" description="In Ref. 2; CAA56564." evidence="7" ref="2">
    <original>A</original>
    <variation>R</variation>
    <location>
        <position position="7"/>
    </location>
</feature>
<feature type="sequence conflict" description="In Ref. 2; CAA56564." evidence="7" ref="2">
    <original>P</original>
    <variation>L</variation>
    <location>
        <position position="26"/>
    </location>
</feature>